<feature type="chain" id="PRO_0000277278" description="Protein translocase subunit SecY">
    <location>
        <begin position="1"/>
        <end position="411"/>
    </location>
</feature>
<feature type="transmembrane region" description="Helical" evidence="2">
    <location>
        <begin position="11"/>
        <end position="31"/>
    </location>
</feature>
<feature type="transmembrane region" description="Helical" evidence="2">
    <location>
        <begin position="52"/>
        <end position="72"/>
    </location>
</feature>
<feature type="transmembrane region" description="Helical" evidence="2">
    <location>
        <begin position="111"/>
        <end position="131"/>
    </location>
</feature>
<feature type="transmembrane region" description="Helical" evidence="2">
    <location>
        <begin position="135"/>
        <end position="155"/>
    </location>
</feature>
<feature type="transmembrane region" description="Helical" evidence="2">
    <location>
        <begin position="163"/>
        <end position="180"/>
    </location>
</feature>
<feature type="transmembrane region" description="Helical" evidence="2">
    <location>
        <begin position="197"/>
        <end position="217"/>
    </location>
</feature>
<feature type="transmembrane region" description="Helical" evidence="2">
    <location>
        <begin position="253"/>
        <end position="273"/>
    </location>
</feature>
<feature type="transmembrane region" description="Helical" evidence="2">
    <location>
        <begin position="291"/>
        <end position="311"/>
    </location>
</feature>
<feature type="transmembrane region" description="Helical" evidence="2">
    <location>
        <begin position="349"/>
        <end position="369"/>
    </location>
</feature>
<feature type="transmembrane region" description="Helical" evidence="2">
    <location>
        <begin position="377"/>
        <end position="397"/>
    </location>
</feature>
<feature type="sequence conflict" description="In Ref. 1; ABJ91302." evidence="3" ref="1">
    <original>A</original>
    <variation>T</variation>
    <location>
        <position position="121"/>
    </location>
</feature>
<feature type="sequence conflict" description="In Ref. 1; ABJ91302." evidence="3" ref="1">
    <original>F</original>
    <variation>S</variation>
    <location>
        <position position="203"/>
    </location>
</feature>
<feature type="sequence conflict" description="In Ref. 1; ABJ91302." evidence="3" ref="1">
    <original>I</original>
    <variation>T</variation>
    <location>
        <position position="385"/>
    </location>
</feature>
<geneLocation type="chloroplast"/>
<reference key="1">
    <citation type="submission" date="2006-09" db="EMBL/GenBank/DDBJ databases">
        <title>Cloning and analysis of the Porphyra yezoensis gene for secY.</title>
        <authorList>
            <person name="Wang M.Q."/>
            <person name="Mao Y.X."/>
        </authorList>
    </citation>
    <scope>NUCLEOTIDE SEQUENCE [GENOMIC DNA]</scope>
    <source>
        <strain>Qingdao</strain>
    </source>
</reference>
<reference key="2">
    <citation type="submission" date="2003-11" db="EMBL/GenBank/DDBJ databases">
        <title>Whole genome sequence of Porphyra yezoensis chloroplast.</title>
        <authorList>
            <person name="Kunimoto M."/>
            <person name="Morishima K."/>
            <person name="Yoshikawa M."/>
            <person name="Fukuda S."/>
            <person name="Kobayashi T."/>
            <person name="Kobayashi M."/>
            <person name="Okazaki T."/>
            <person name="Ohara I."/>
            <person name="Nakayama I."/>
        </authorList>
    </citation>
    <scope>NUCLEOTIDE SEQUENCE [LARGE SCALE GENOMIC DNA]</scope>
    <source>
        <strain>U-51</strain>
    </source>
</reference>
<dbReference type="EMBL" id="DQ995187">
    <property type="protein sequence ID" value="ABJ91302.1"/>
    <property type="molecule type" value="Genomic_DNA"/>
</dbReference>
<dbReference type="EMBL" id="AP006715">
    <property type="protein sequence ID" value="BAE92420.1"/>
    <property type="molecule type" value="Genomic_DNA"/>
</dbReference>
<dbReference type="RefSeq" id="YP_536977.1">
    <property type="nucleotide sequence ID" value="NC_007932.1"/>
</dbReference>
<dbReference type="SMR" id="Q1XDJ1"/>
<dbReference type="GeneID" id="3978774"/>
<dbReference type="GO" id="GO:0009535">
    <property type="term" value="C:chloroplast thylakoid membrane"/>
    <property type="evidence" value="ECO:0007669"/>
    <property type="project" value="UniProtKB-SubCell"/>
</dbReference>
<dbReference type="GO" id="GO:0065002">
    <property type="term" value="P:intracellular protein transmembrane transport"/>
    <property type="evidence" value="ECO:0007669"/>
    <property type="project" value="UniProtKB-UniRule"/>
</dbReference>
<dbReference type="GO" id="GO:0006605">
    <property type="term" value="P:protein targeting"/>
    <property type="evidence" value="ECO:0007669"/>
    <property type="project" value="UniProtKB-UniRule"/>
</dbReference>
<dbReference type="FunFam" id="1.10.3370.10:FF:000001">
    <property type="entry name" value="Preprotein translocase subunit SecY"/>
    <property type="match status" value="1"/>
</dbReference>
<dbReference type="Gene3D" id="1.10.3370.10">
    <property type="entry name" value="SecY subunit domain"/>
    <property type="match status" value="1"/>
</dbReference>
<dbReference type="HAMAP" id="MF_01465">
    <property type="entry name" value="SecY"/>
    <property type="match status" value="1"/>
</dbReference>
<dbReference type="InterPro" id="IPR026593">
    <property type="entry name" value="SecY"/>
</dbReference>
<dbReference type="InterPro" id="IPR002208">
    <property type="entry name" value="SecY/SEC61-alpha"/>
</dbReference>
<dbReference type="InterPro" id="IPR030659">
    <property type="entry name" value="SecY_CS"/>
</dbReference>
<dbReference type="InterPro" id="IPR023201">
    <property type="entry name" value="SecY_dom_sf"/>
</dbReference>
<dbReference type="NCBIfam" id="TIGR00967">
    <property type="entry name" value="3a0501s007"/>
    <property type="match status" value="1"/>
</dbReference>
<dbReference type="PANTHER" id="PTHR10906">
    <property type="entry name" value="SECY/SEC61-ALPHA FAMILY MEMBER"/>
    <property type="match status" value="1"/>
</dbReference>
<dbReference type="Pfam" id="PF00344">
    <property type="entry name" value="SecY"/>
    <property type="match status" value="1"/>
</dbReference>
<dbReference type="PIRSF" id="PIRSF004557">
    <property type="entry name" value="SecY"/>
    <property type="match status" value="1"/>
</dbReference>
<dbReference type="PRINTS" id="PR00303">
    <property type="entry name" value="SECYTRNLCASE"/>
</dbReference>
<dbReference type="SUPFAM" id="SSF103491">
    <property type="entry name" value="Preprotein translocase SecY subunit"/>
    <property type="match status" value="1"/>
</dbReference>
<dbReference type="PROSITE" id="PS00755">
    <property type="entry name" value="SECY_1"/>
    <property type="match status" value="1"/>
</dbReference>
<dbReference type="PROSITE" id="PS00756">
    <property type="entry name" value="SECY_2"/>
    <property type="match status" value="1"/>
</dbReference>
<keyword id="KW-0150">Chloroplast</keyword>
<keyword id="KW-0472">Membrane</keyword>
<keyword id="KW-0934">Plastid</keyword>
<keyword id="KW-0653">Protein transport</keyword>
<keyword id="KW-0793">Thylakoid</keyword>
<keyword id="KW-0811">Translocation</keyword>
<keyword id="KW-0812">Transmembrane</keyword>
<keyword id="KW-1133">Transmembrane helix</keyword>
<keyword id="KW-0813">Transport</keyword>
<proteinExistence type="inferred from homology"/>
<evidence type="ECO:0000250" key="1"/>
<evidence type="ECO:0000255" key="2">
    <source>
        <dbReference type="HAMAP-Rule" id="MF_01465"/>
    </source>
</evidence>
<evidence type="ECO:0000305" key="3"/>
<protein>
    <recommendedName>
        <fullName evidence="2">Protein translocase subunit SecY</fullName>
    </recommendedName>
</protein>
<name>SECY_PYRYE</name>
<comment type="function">
    <text evidence="2">The central subunit of the protein translocation channel SecYE. Consists of two halves formed by TMs 1-5 and 6-10. These two domains form a lateral gate at the front which open onto the bilayer between TMs 2 and 7, and are clamped together by SecE at the back. The channel is closed by both a pore ring composed of hydrophobic SecY resides and a short helix (helix 2A) on the extracellular side of the membrane which forms a plug.</text>
</comment>
<comment type="subunit">
    <text evidence="1">Component of the plastid Sec protein translocase complex, which is composed of at least SecY, SecE and SecG.</text>
</comment>
<comment type="subcellular location">
    <subcellularLocation>
        <location evidence="2">Plastid</location>
        <location evidence="2">Chloroplast thylakoid membrane</location>
        <topology evidence="2">Multi-pass membrane protein</topology>
    </subcellularLocation>
</comment>
<comment type="similarity">
    <text evidence="2">Belongs to the SecY/SEC61-alpha family.</text>
</comment>
<gene>
    <name evidence="2" type="primary">secY</name>
</gene>
<organism>
    <name type="scientific">Pyropia yezoensis</name>
    <name type="common">Susabi-nori</name>
    <name type="synonym">Porphyra yezoensis</name>
    <dbReference type="NCBI Taxonomy" id="2788"/>
    <lineage>
        <taxon>Eukaryota</taxon>
        <taxon>Rhodophyta</taxon>
        <taxon>Bangiophyceae</taxon>
        <taxon>Bangiales</taxon>
        <taxon>Bangiaceae</taxon>
        <taxon>Pyropia</taxon>
    </lineage>
</organism>
<sequence length="411" mass="45558">MSQKSDLRNRIIFTLFLLVLARLGIFIPVPGIDHDAFYASVEKNTLVNFLNIFSGGGFSTIGIFALGIVPYINSSIVMQLLTKIVPNLEKLQKEEGELGRQKITQITRYLALGWATLQSGAISIWVKPYVFNWNFAFVCESVLALTAGSMIIMWLSELITEKGIGNGASLLIFQNIVSGLPKNFTQSFFDASYSNASLKFGLFIAIFLLMIIITICVQEGTRRIKIISARQLGKSSILDPNSYLPLKLNQGGVMPIVFASASMALPSYLTQIIQNKTLLQILYLFCPNGSLYLLLYCALILFFSYFYTSIVMNPEDIAINLKKMGASIPNIRPGQATIDYLQVILNRLTFLGASFLFTVALIPFIIEKVTQIQNLRGLGATSLLILVGVAIDTAKQIQTYVISKKYDSMTK</sequence>
<accession>Q1XDJ1</accession>
<accession>A0MM94</accession>